<gene>
    <name evidence="1" type="primary">glk</name>
    <name type="ordered locus">mlr4640</name>
</gene>
<evidence type="ECO:0000255" key="1">
    <source>
        <dbReference type="HAMAP-Rule" id="MF_00524"/>
    </source>
</evidence>
<organism>
    <name type="scientific">Mesorhizobium japonicum (strain LMG 29417 / CECT 9101 / MAFF 303099)</name>
    <name type="common">Mesorhizobium loti (strain MAFF 303099)</name>
    <dbReference type="NCBI Taxonomy" id="266835"/>
    <lineage>
        <taxon>Bacteria</taxon>
        <taxon>Pseudomonadati</taxon>
        <taxon>Pseudomonadota</taxon>
        <taxon>Alphaproteobacteria</taxon>
        <taxon>Hyphomicrobiales</taxon>
        <taxon>Phyllobacteriaceae</taxon>
        <taxon>Mesorhizobium</taxon>
    </lineage>
</organism>
<dbReference type="EC" id="2.7.1.2" evidence="1"/>
<dbReference type="EMBL" id="BA000012">
    <property type="protein sequence ID" value="BAB51248.1"/>
    <property type="molecule type" value="Genomic_DNA"/>
</dbReference>
<dbReference type="RefSeq" id="WP_010912590.1">
    <property type="nucleotide sequence ID" value="NC_002678.2"/>
</dbReference>
<dbReference type="SMR" id="Q98DM2"/>
<dbReference type="KEGG" id="mlo:mlr4640"/>
<dbReference type="eggNOG" id="COG0837">
    <property type="taxonomic scope" value="Bacteria"/>
</dbReference>
<dbReference type="HOGENOM" id="CLU_042582_1_0_5"/>
<dbReference type="Proteomes" id="UP000000552">
    <property type="component" value="Chromosome"/>
</dbReference>
<dbReference type="GO" id="GO:0005829">
    <property type="term" value="C:cytosol"/>
    <property type="evidence" value="ECO:0007669"/>
    <property type="project" value="TreeGrafter"/>
</dbReference>
<dbReference type="GO" id="GO:0005524">
    <property type="term" value="F:ATP binding"/>
    <property type="evidence" value="ECO:0007669"/>
    <property type="project" value="UniProtKB-UniRule"/>
</dbReference>
<dbReference type="GO" id="GO:0005536">
    <property type="term" value="F:D-glucose binding"/>
    <property type="evidence" value="ECO:0007669"/>
    <property type="project" value="InterPro"/>
</dbReference>
<dbReference type="GO" id="GO:0004340">
    <property type="term" value="F:glucokinase activity"/>
    <property type="evidence" value="ECO:0007669"/>
    <property type="project" value="UniProtKB-UniRule"/>
</dbReference>
<dbReference type="GO" id="GO:0006096">
    <property type="term" value="P:glycolytic process"/>
    <property type="evidence" value="ECO:0007669"/>
    <property type="project" value="UniProtKB-UniRule"/>
</dbReference>
<dbReference type="CDD" id="cd24008">
    <property type="entry name" value="ASKHA_NBD_GLK"/>
    <property type="match status" value="1"/>
</dbReference>
<dbReference type="Gene3D" id="3.30.420.40">
    <property type="match status" value="1"/>
</dbReference>
<dbReference type="Gene3D" id="3.40.367.20">
    <property type="match status" value="1"/>
</dbReference>
<dbReference type="HAMAP" id="MF_00524">
    <property type="entry name" value="Glucokinase"/>
    <property type="match status" value="1"/>
</dbReference>
<dbReference type="InterPro" id="IPR043129">
    <property type="entry name" value="ATPase_NBD"/>
</dbReference>
<dbReference type="InterPro" id="IPR050201">
    <property type="entry name" value="Bacterial_glucokinase"/>
</dbReference>
<dbReference type="InterPro" id="IPR003836">
    <property type="entry name" value="Glucokinase"/>
</dbReference>
<dbReference type="NCBIfam" id="TIGR00749">
    <property type="entry name" value="glk"/>
    <property type="match status" value="1"/>
</dbReference>
<dbReference type="NCBIfam" id="NF001417">
    <property type="entry name" value="PRK00292.1-4"/>
    <property type="match status" value="1"/>
</dbReference>
<dbReference type="PANTHER" id="PTHR47690">
    <property type="entry name" value="GLUCOKINASE"/>
    <property type="match status" value="1"/>
</dbReference>
<dbReference type="PANTHER" id="PTHR47690:SF1">
    <property type="entry name" value="GLUCOKINASE"/>
    <property type="match status" value="1"/>
</dbReference>
<dbReference type="Pfam" id="PF02685">
    <property type="entry name" value="Glucokinase"/>
    <property type="match status" value="1"/>
</dbReference>
<dbReference type="SUPFAM" id="SSF53067">
    <property type="entry name" value="Actin-like ATPase domain"/>
    <property type="match status" value="1"/>
</dbReference>
<feature type="chain" id="PRO_0000215135" description="Glucokinase">
    <location>
        <begin position="1"/>
        <end position="341"/>
    </location>
</feature>
<feature type="binding site" evidence="1">
    <location>
        <begin position="18"/>
        <end position="23"/>
    </location>
    <ligand>
        <name>ATP</name>
        <dbReference type="ChEBI" id="CHEBI:30616"/>
    </ligand>
</feature>
<proteinExistence type="inferred from homology"/>
<sequence>MPSVSDTDTSLRFPILIGDIGGTNARFSIVLDANSEPTEPQIVQTANFNTIDEAIQAAVLDRSSVRPNSAVLAVAGPVDGDEIELTNCPWVVKPRQMFANLGLSDIVVLNDFEAQALAVVALGEEHMEKIGGGTPEPNAGRVVLGPGTGLGVAGLVYALRHWIPVPGEGGHMDIGPRTPRDFEVFPHIEKLEGRISGEQILCGRGLVNVYRAVAKADGKPAPFTTPAEITGAALAKTDPVAEEALETFVTCLGRTAGDLALVFMSRGGVFLTGGIAQKIVPALKEGNFRAAFEDKAPHSALMRTMPVYVITHPLAALLGLAAYARNPSLFGVQTAGRRWQA</sequence>
<keyword id="KW-0067">ATP-binding</keyword>
<keyword id="KW-0963">Cytoplasm</keyword>
<keyword id="KW-0324">Glycolysis</keyword>
<keyword id="KW-0418">Kinase</keyword>
<keyword id="KW-0547">Nucleotide-binding</keyword>
<keyword id="KW-0808">Transferase</keyword>
<protein>
    <recommendedName>
        <fullName evidence="1">Glucokinase</fullName>
        <ecNumber evidence="1">2.7.1.2</ecNumber>
    </recommendedName>
    <alternativeName>
        <fullName evidence="1">Glucose kinase</fullName>
    </alternativeName>
</protein>
<comment type="catalytic activity">
    <reaction evidence="1">
        <text>D-glucose + ATP = D-glucose 6-phosphate + ADP + H(+)</text>
        <dbReference type="Rhea" id="RHEA:17825"/>
        <dbReference type="ChEBI" id="CHEBI:4167"/>
        <dbReference type="ChEBI" id="CHEBI:15378"/>
        <dbReference type="ChEBI" id="CHEBI:30616"/>
        <dbReference type="ChEBI" id="CHEBI:61548"/>
        <dbReference type="ChEBI" id="CHEBI:456216"/>
        <dbReference type="EC" id="2.7.1.2"/>
    </reaction>
</comment>
<comment type="subcellular location">
    <subcellularLocation>
        <location evidence="1">Cytoplasm</location>
    </subcellularLocation>
</comment>
<comment type="similarity">
    <text evidence="1">Belongs to the bacterial glucokinase family.</text>
</comment>
<accession>Q98DM2</accession>
<reference key="1">
    <citation type="journal article" date="2000" name="DNA Res.">
        <title>Complete genome structure of the nitrogen-fixing symbiotic bacterium Mesorhizobium loti.</title>
        <authorList>
            <person name="Kaneko T."/>
            <person name="Nakamura Y."/>
            <person name="Sato S."/>
            <person name="Asamizu E."/>
            <person name="Kato T."/>
            <person name="Sasamoto S."/>
            <person name="Watanabe A."/>
            <person name="Idesawa K."/>
            <person name="Ishikawa A."/>
            <person name="Kawashima K."/>
            <person name="Kimura T."/>
            <person name="Kishida Y."/>
            <person name="Kiyokawa C."/>
            <person name="Kohara M."/>
            <person name="Matsumoto M."/>
            <person name="Matsuno A."/>
            <person name="Mochizuki Y."/>
            <person name="Nakayama S."/>
            <person name="Nakazaki N."/>
            <person name="Shimpo S."/>
            <person name="Sugimoto M."/>
            <person name="Takeuchi C."/>
            <person name="Yamada M."/>
            <person name="Tabata S."/>
        </authorList>
    </citation>
    <scope>NUCLEOTIDE SEQUENCE [LARGE SCALE GENOMIC DNA]</scope>
    <source>
        <strain>LMG 29417 / CECT 9101 / MAFF 303099</strain>
    </source>
</reference>
<name>GLK_RHILO</name>